<organism>
    <name type="scientific">Desulforamulus reducens (strain ATCC BAA-1160 / DSM 100696 / MI-1)</name>
    <name type="common">Desulfotomaculum reducens</name>
    <dbReference type="NCBI Taxonomy" id="349161"/>
    <lineage>
        <taxon>Bacteria</taxon>
        <taxon>Bacillati</taxon>
        <taxon>Bacillota</taxon>
        <taxon>Clostridia</taxon>
        <taxon>Eubacteriales</taxon>
        <taxon>Peptococcaceae</taxon>
        <taxon>Desulforamulus</taxon>
    </lineage>
</organism>
<dbReference type="EMBL" id="CP000612">
    <property type="protein sequence ID" value="ABO48766.1"/>
    <property type="molecule type" value="Genomic_DNA"/>
</dbReference>
<dbReference type="RefSeq" id="WP_011876606.1">
    <property type="nucleotide sequence ID" value="NC_009253.1"/>
</dbReference>
<dbReference type="SMR" id="A4J113"/>
<dbReference type="STRING" id="349161.Dred_0217"/>
<dbReference type="KEGG" id="drm:Dred_0217"/>
<dbReference type="eggNOG" id="COG0089">
    <property type="taxonomic scope" value="Bacteria"/>
</dbReference>
<dbReference type="HOGENOM" id="CLU_037562_3_2_9"/>
<dbReference type="OrthoDB" id="9793353at2"/>
<dbReference type="Proteomes" id="UP000001556">
    <property type="component" value="Chromosome"/>
</dbReference>
<dbReference type="GO" id="GO:1990904">
    <property type="term" value="C:ribonucleoprotein complex"/>
    <property type="evidence" value="ECO:0007669"/>
    <property type="project" value="UniProtKB-KW"/>
</dbReference>
<dbReference type="GO" id="GO:0005840">
    <property type="term" value="C:ribosome"/>
    <property type="evidence" value="ECO:0007669"/>
    <property type="project" value="UniProtKB-KW"/>
</dbReference>
<dbReference type="GO" id="GO:0019843">
    <property type="term" value="F:rRNA binding"/>
    <property type="evidence" value="ECO:0007669"/>
    <property type="project" value="UniProtKB-UniRule"/>
</dbReference>
<dbReference type="GO" id="GO:0003735">
    <property type="term" value="F:structural constituent of ribosome"/>
    <property type="evidence" value="ECO:0007669"/>
    <property type="project" value="InterPro"/>
</dbReference>
<dbReference type="GO" id="GO:0006412">
    <property type="term" value="P:translation"/>
    <property type="evidence" value="ECO:0007669"/>
    <property type="project" value="UniProtKB-UniRule"/>
</dbReference>
<dbReference type="FunFam" id="3.30.70.330:FF:000001">
    <property type="entry name" value="50S ribosomal protein L23"/>
    <property type="match status" value="1"/>
</dbReference>
<dbReference type="Gene3D" id="3.30.70.330">
    <property type="match status" value="1"/>
</dbReference>
<dbReference type="HAMAP" id="MF_01369_B">
    <property type="entry name" value="Ribosomal_uL23_B"/>
    <property type="match status" value="1"/>
</dbReference>
<dbReference type="InterPro" id="IPR012677">
    <property type="entry name" value="Nucleotide-bd_a/b_plait_sf"/>
</dbReference>
<dbReference type="InterPro" id="IPR013025">
    <property type="entry name" value="Ribosomal_uL23-like"/>
</dbReference>
<dbReference type="InterPro" id="IPR012678">
    <property type="entry name" value="Ribosomal_uL23/eL15/eS24_sf"/>
</dbReference>
<dbReference type="InterPro" id="IPR001014">
    <property type="entry name" value="Ribosomal_uL23_CS"/>
</dbReference>
<dbReference type="NCBIfam" id="NF004359">
    <property type="entry name" value="PRK05738.1-3"/>
    <property type="match status" value="1"/>
</dbReference>
<dbReference type="NCBIfam" id="NF004363">
    <property type="entry name" value="PRK05738.2-4"/>
    <property type="match status" value="1"/>
</dbReference>
<dbReference type="NCBIfam" id="NF004364">
    <property type="entry name" value="PRK05738.2-5"/>
    <property type="match status" value="1"/>
</dbReference>
<dbReference type="NCBIfam" id="NF004366">
    <property type="entry name" value="PRK05738.3-2"/>
    <property type="match status" value="1"/>
</dbReference>
<dbReference type="PANTHER" id="PTHR11620">
    <property type="entry name" value="60S RIBOSOMAL PROTEIN L23A"/>
    <property type="match status" value="1"/>
</dbReference>
<dbReference type="Pfam" id="PF00276">
    <property type="entry name" value="Ribosomal_L23"/>
    <property type="match status" value="1"/>
</dbReference>
<dbReference type="SUPFAM" id="SSF54189">
    <property type="entry name" value="Ribosomal proteins S24e, L23 and L15e"/>
    <property type="match status" value="1"/>
</dbReference>
<dbReference type="PROSITE" id="PS00050">
    <property type="entry name" value="RIBOSOMAL_L23"/>
    <property type="match status" value="1"/>
</dbReference>
<gene>
    <name evidence="1" type="primary">rplW</name>
    <name type="ordered locus">Dred_0217</name>
</gene>
<protein>
    <recommendedName>
        <fullName evidence="1">Large ribosomal subunit protein uL23</fullName>
    </recommendedName>
    <alternativeName>
        <fullName evidence="2">50S ribosomal protein L23</fullName>
    </alternativeName>
</protein>
<comment type="function">
    <text evidence="1">One of the early assembly proteins it binds 23S rRNA. One of the proteins that surrounds the polypeptide exit tunnel on the outside of the ribosome. Forms the main docking site for trigger factor binding to the ribosome.</text>
</comment>
<comment type="subunit">
    <text evidence="1">Part of the 50S ribosomal subunit. Contacts protein L29, and trigger factor when it is bound to the ribosome.</text>
</comment>
<comment type="similarity">
    <text evidence="1">Belongs to the universal ribosomal protein uL23 family.</text>
</comment>
<feature type="chain" id="PRO_1000184086" description="Large ribosomal subunit protein uL23">
    <location>
        <begin position="1"/>
        <end position="95"/>
    </location>
</feature>
<sequence>MKNPRDILIKPVVTEKSTGLLAENKYTFIVDLNANKTEVKKAVEEIFKVKVEKVNTMRVKGKLKRVRQFTGKTPDRKKAIVTLKEGDKIEIFEGL</sequence>
<reference key="1">
    <citation type="submission" date="2007-03" db="EMBL/GenBank/DDBJ databases">
        <title>Complete sequence of Desulfotomaculum reducens MI-1.</title>
        <authorList>
            <consortium name="US DOE Joint Genome Institute"/>
            <person name="Copeland A."/>
            <person name="Lucas S."/>
            <person name="Lapidus A."/>
            <person name="Barry K."/>
            <person name="Detter J.C."/>
            <person name="Glavina del Rio T."/>
            <person name="Hammon N."/>
            <person name="Israni S."/>
            <person name="Dalin E."/>
            <person name="Tice H."/>
            <person name="Pitluck S."/>
            <person name="Sims D."/>
            <person name="Brettin T."/>
            <person name="Bruce D."/>
            <person name="Han C."/>
            <person name="Tapia R."/>
            <person name="Schmutz J."/>
            <person name="Larimer F."/>
            <person name="Land M."/>
            <person name="Hauser L."/>
            <person name="Kyrpides N."/>
            <person name="Kim E."/>
            <person name="Tebo B.M."/>
            <person name="Richardson P."/>
        </authorList>
    </citation>
    <scope>NUCLEOTIDE SEQUENCE [LARGE SCALE GENOMIC DNA]</scope>
    <source>
        <strain>ATCC BAA-1160 / DSM 100696 / MI-1</strain>
    </source>
</reference>
<evidence type="ECO:0000255" key="1">
    <source>
        <dbReference type="HAMAP-Rule" id="MF_01369"/>
    </source>
</evidence>
<evidence type="ECO:0000305" key="2"/>
<accession>A4J113</accession>
<proteinExistence type="inferred from homology"/>
<name>RL23_DESRM</name>
<keyword id="KW-1185">Reference proteome</keyword>
<keyword id="KW-0687">Ribonucleoprotein</keyword>
<keyword id="KW-0689">Ribosomal protein</keyword>
<keyword id="KW-0694">RNA-binding</keyword>
<keyword id="KW-0699">rRNA-binding</keyword>